<reference evidence="5" key="1">
    <citation type="journal article" date="2020" name="J. Med. Chem.">
        <title>A venomics approach coupled to high-throughput toxin production strategies identifies the first venom-derived melanocortin receptor agonists.</title>
        <authorList>
            <person name="Reynaud S."/>
            <person name="Ciolek J."/>
            <person name="Degueldre M."/>
            <person name="Saez N.J."/>
            <person name="Sequeira A.F."/>
            <person name="Duhoo Y."/>
            <person name="Bras J.L.A."/>
            <person name="Meudal H."/>
            <person name="Cabo Diez M."/>
            <person name="Fernandez Pedrosa V."/>
            <person name="Verdenaud M."/>
            <person name="Boeri J."/>
            <person name="Pereira Ramos O."/>
            <person name="Ducancel F."/>
            <person name="Vanden Driessche M."/>
            <person name="Fourmy R."/>
            <person name="Violette A."/>
            <person name="Upert G."/>
            <person name="Mourier G."/>
            <person name="Beck-Sickinger A.G."/>
            <person name="Morl K."/>
            <person name="Landon C."/>
            <person name="Fontes C.M.G.A."/>
            <person name="Minambres Herraiz R."/>
            <person name="Rodriguez de la Vega R.C."/>
            <person name="Peigneur S."/>
            <person name="Tytgat J."/>
            <person name="Quinton L."/>
            <person name="De Pauw E."/>
            <person name="Vincentelli R."/>
            <person name="Servent D."/>
            <person name="Gilles N."/>
        </authorList>
    </citation>
    <scope>NUCLEOTIDE SEQUENCE [MRNA]</scope>
    <scope>FUNCTION</scope>
    <scope>SYNTHESIS</scope>
    <scope>STRUCTURE BY NMR</scope>
    <scope>DISULFIDE BONDS</scope>
    <source>
        <tissue>Venom gland</tissue>
    </source>
</reference>
<sequence length="34" mass="3802">QMDMRCSASVECKQKCLKAIGSIFGKCMNKKCKC</sequence>
<dbReference type="PDB" id="6SAB">
    <property type="method" value="NMR"/>
    <property type="chains" value="A=1-34"/>
</dbReference>
<dbReference type="PDBsum" id="6SAB"/>
<dbReference type="SMR" id="P0DUJ3"/>
<dbReference type="GO" id="GO:0005576">
    <property type="term" value="C:extracellular region"/>
    <property type="evidence" value="ECO:0007669"/>
    <property type="project" value="UniProtKB-SubCell"/>
</dbReference>
<dbReference type="GO" id="GO:0008200">
    <property type="term" value="F:ion channel inhibitor activity"/>
    <property type="evidence" value="ECO:0007669"/>
    <property type="project" value="InterPro"/>
</dbReference>
<dbReference type="GO" id="GO:0090729">
    <property type="term" value="F:toxin activity"/>
    <property type="evidence" value="ECO:0007669"/>
    <property type="project" value="UniProtKB-KW"/>
</dbReference>
<dbReference type="Gene3D" id="3.30.30.10">
    <property type="entry name" value="Knottin, scorpion toxin-like"/>
    <property type="match status" value="1"/>
</dbReference>
<dbReference type="InterPro" id="IPR036574">
    <property type="entry name" value="Scorpion_toxin-like_sf"/>
</dbReference>
<dbReference type="InterPro" id="IPR001947">
    <property type="entry name" value="Scorpion_toxinS_K_inh"/>
</dbReference>
<dbReference type="Pfam" id="PF00451">
    <property type="entry name" value="Toxin_2"/>
    <property type="match status" value="1"/>
</dbReference>
<dbReference type="SUPFAM" id="SSF57095">
    <property type="entry name" value="Scorpion toxin-like"/>
    <property type="match status" value="1"/>
</dbReference>
<dbReference type="PROSITE" id="PS01138">
    <property type="entry name" value="SCORP_SHORT_TOXIN"/>
    <property type="match status" value="1"/>
</dbReference>
<comment type="function">
    <text evidence="1">Toxin that acts as an agonist on melanocortin receptors (MC1R, MC3R, MC5R, MC5R). After binding to MC1R, the peptide activates the hMC1R/Gs pathway, but after binding to MC4R, it is not able to activate or antagonize the MC4R/Gs pathway. Inhibits melanocyte stimulating hormone (MSH)-binding to human receptors (Ki=2.9 uM to MC1R, Ki=3.9 uM to MC3R, Ki=2.6 uM to MC4R, Ki=2.2 uM to MC5R). This toxin is structurally unrelated to the natural agonists.</text>
</comment>
<comment type="subcellular location">
    <subcellularLocation>
        <location evidence="4">Secreted</location>
    </subcellularLocation>
</comment>
<comment type="tissue specificity">
    <text evidence="4">Expressed by the venom gland.</text>
</comment>
<comment type="domain">
    <text evidence="1">Has the structural arrangement of an alpha-helix connected to antiparallel beta-sheets by disulfide bonds.</text>
</comment>
<comment type="miscellaneous">
    <text evidence="1">Negative results: does not show activity when tested at 100 uM on mammalian sodium channels (Nav1.1, Nav1.2, Nav1.3, Nav1.4, Nav1.5, Nav1.6, Nav1.7, and Nav1.8), potassium channels (Kv1.1, Kv1.2, Kv1.3, Kv1.4, Kv1.5, Kv1.6, Kv2.1, Kv3.1, Kv4.3, Kv7.1, Kv7.3, Kv10.1, Kv11.1(hERG), GIRK1), a calcium channel (Cav3.3), and nicotinic acetylcholine receceptors alpha1-beta-1-gamma-delta and nAChR alpha-7.</text>
</comment>
<comment type="miscellaneous">
    <text evidence="4">The letter 'N' in the name stands for the Greek letter 'nu' that has been chosen as the activity descriptor for melanocortin receptor modulators. Since it is impossible to search for Greek letters in databases, the UniProt policy is to write all Greek letters as their full names (i.e. alpha, beta, etc.).</text>
</comment>
<name>TXN1A_PARTR</name>
<accession>P0DUJ3</accession>
<keyword id="KW-0002">3D-structure</keyword>
<keyword id="KW-1015">Disulfide bond</keyword>
<keyword id="KW-1213">G-protein coupled receptor impairing toxin</keyword>
<keyword id="KW-0964">Secreted</keyword>
<keyword id="KW-0800">Toxin</keyword>
<proteinExistence type="evidence at protein level"/>
<protein>
    <recommendedName>
        <fullName evidence="3">NU-buthitoxin-Ptr1a</fullName>
        <shortName evidence="2">N-BUTX-Ptr1a</shortName>
        <shortName evidence="2">NU-BUTX-Ptr1a</shortName>
    </recommendedName>
</protein>
<feature type="chain" id="PRO_0000452479" description="NU-buthitoxin-Ptr1a" evidence="1">
    <location>
        <begin position="1"/>
        <end position="34"/>
    </location>
</feature>
<feature type="disulfide bond" evidence="1 5">
    <location>
        <begin position="6"/>
        <end position="27"/>
    </location>
</feature>
<feature type="disulfide bond" evidence="1 5">
    <location>
        <begin position="12"/>
        <end position="32"/>
    </location>
</feature>
<feature type="disulfide bond" evidence="1 5">
    <location>
        <begin position="16"/>
        <end position="34"/>
    </location>
</feature>
<evidence type="ECO:0000269" key="1">
    <source>
    </source>
</evidence>
<evidence type="ECO:0000303" key="2">
    <source>
    </source>
</evidence>
<evidence type="ECO:0000305" key="3"/>
<evidence type="ECO:0000305" key="4">
    <source>
    </source>
</evidence>
<evidence type="ECO:0007744" key="5">
    <source>
        <dbReference type="PDB" id="6SAB"/>
    </source>
</evidence>
<organism>
    <name type="scientific">Parabuthus transvaalicus</name>
    <name type="common">Transvaal thick-tailed scorpion</name>
    <dbReference type="NCBI Taxonomy" id="170972"/>
    <lineage>
        <taxon>Eukaryota</taxon>
        <taxon>Metazoa</taxon>
        <taxon>Ecdysozoa</taxon>
        <taxon>Arthropoda</taxon>
        <taxon>Chelicerata</taxon>
        <taxon>Arachnida</taxon>
        <taxon>Scorpiones</taxon>
        <taxon>Buthida</taxon>
        <taxon>Buthoidea</taxon>
        <taxon>Buthidae</taxon>
        <taxon>Parabuthus</taxon>
    </lineage>
</organism>